<reference key="1">
    <citation type="journal article" date="2005" name="Genome Biol.">
        <title>Full-length cDNAs from chicken bursal lymphocytes to facilitate gene function analysis.</title>
        <authorList>
            <person name="Caldwell R.B."/>
            <person name="Kierzek A.M."/>
            <person name="Arakawa H."/>
            <person name="Bezzubov Y."/>
            <person name="Zaim J."/>
            <person name="Fiedler P."/>
            <person name="Kutter S."/>
            <person name="Blagodatski A."/>
            <person name="Kostovska D."/>
            <person name="Koter M."/>
            <person name="Plachy J."/>
            <person name="Carninci P."/>
            <person name="Hayashizaki Y."/>
            <person name="Buerstedde J.-M."/>
        </authorList>
    </citation>
    <scope>NUCLEOTIDE SEQUENCE [LARGE SCALE MRNA]</scope>
    <source>
        <strain>CB</strain>
        <tissue>Bursa of Fabricius</tissue>
    </source>
</reference>
<dbReference type="EMBL" id="AJ719975">
    <property type="protein sequence ID" value="CAG31634.1"/>
    <property type="molecule type" value="mRNA"/>
</dbReference>
<dbReference type="RefSeq" id="NP_001012872.1">
    <property type="nucleotide sequence ID" value="NM_001012854.3"/>
</dbReference>
<dbReference type="SMR" id="Q5ZKV9"/>
<dbReference type="FunCoup" id="Q5ZKV9">
    <property type="interactions" value="2356"/>
</dbReference>
<dbReference type="STRING" id="9031.ENSGALP00000071035"/>
<dbReference type="GlyGen" id="Q5ZKV9">
    <property type="glycosylation" value="1 site"/>
</dbReference>
<dbReference type="PaxDb" id="9031-ENSGALP00000037320"/>
<dbReference type="Ensembl" id="ENSGALT00010007597.1">
    <property type="protein sequence ID" value="ENSGALP00010004528.1"/>
    <property type="gene ID" value="ENSGALG00010003243.1"/>
</dbReference>
<dbReference type="GeneID" id="420560"/>
<dbReference type="KEGG" id="gga:420560"/>
<dbReference type="CTD" id="55610"/>
<dbReference type="VEuPathDB" id="HostDB:geneid_420560"/>
<dbReference type="eggNOG" id="KOG2939">
    <property type="taxonomic scope" value="Eukaryota"/>
</dbReference>
<dbReference type="GeneTree" id="ENSGT00390000003442"/>
<dbReference type="InParanoid" id="Q5ZKV9"/>
<dbReference type="OrthoDB" id="10263345at2759"/>
<dbReference type="PhylomeDB" id="Q5ZKV9"/>
<dbReference type="PRO" id="PR:Q5ZKV9"/>
<dbReference type="Proteomes" id="UP000000539">
    <property type="component" value="Chromosome 2"/>
</dbReference>
<dbReference type="Bgee" id="ENSGALG00000009500">
    <property type="expression patterns" value="Expressed in spermatid and 14 other cell types or tissues"/>
</dbReference>
<dbReference type="GO" id="GO:1990745">
    <property type="term" value="C:EARP complex"/>
    <property type="evidence" value="ECO:0000250"/>
    <property type="project" value="UniProtKB"/>
</dbReference>
<dbReference type="GO" id="GO:0016020">
    <property type="term" value="C:membrane"/>
    <property type="evidence" value="ECO:0000250"/>
    <property type="project" value="UniProtKB"/>
</dbReference>
<dbReference type="GO" id="GO:0055037">
    <property type="term" value="C:recycling endosome"/>
    <property type="evidence" value="ECO:0000250"/>
    <property type="project" value="UniProtKB"/>
</dbReference>
<dbReference type="GO" id="GO:0000149">
    <property type="term" value="F:SNARE binding"/>
    <property type="evidence" value="ECO:0000318"/>
    <property type="project" value="GO_Central"/>
</dbReference>
<dbReference type="GO" id="GO:0032456">
    <property type="term" value="P:endocytic recycling"/>
    <property type="evidence" value="ECO:0000250"/>
    <property type="project" value="UniProtKB"/>
</dbReference>
<dbReference type="GO" id="GO:0015031">
    <property type="term" value="P:protein transport"/>
    <property type="evidence" value="ECO:0007669"/>
    <property type="project" value="UniProtKB-KW"/>
</dbReference>
<dbReference type="InterPro" id="IPR019514">
    <property type="entry name" value="Syndetin_C"/>
</dbReference>
<dbReference type="InterPro" id="IPR040047">
    <property type="entry name" value="VPS50"/>
</dbReference>
<dbReference type="InterPro" id="IPR019515">
    <property type="entry name" value="VPS54_N"/>
</dbReference>
<dbReference type="PANTHER" id="PTHR13258">
    <property type="entry name" value="SYNDETIN"/>
    <property type="match status" value="1"/>
</dbReference>
<dbReference type="PANTHER" id="PTHR13258:SF0">
    <property type="entry name" value="SYNDETIN"/>
    <property type="match status" value="1"/>
</dbReference>
<dbReference type="Pfam" id="PF10474">
    <property type="entry name" value="Syndetin_C"/>
    <property type="match status" value="1"/>
</dbReference>
<dbReference type="Pfam" id="PF10475">
    <property type="entry name" value="Vps54_N"/>
    <property type="match status" value="1"/>
</dbReference>
<organism>
    <name type="scientific">Gallus gallus</name>
    <name type="common">Chicken</name>
    <dbReference type="NCBI Taxonomy" id="9031"/>
    <lineage>
        <taxon>Eukaryota</taxon>
        <taxon>Metazoa</taxon>
        <taxon>Chordata</taxon>
        <taxon>Craniata</taxon>
        <taxon>Vertebrata</taxon>
        <taxon>Euteleostomi</taxon>
        <taxon>Archelosauria</taxon>
        <taxon>Archosauria</taxon>
        <taxon>Dinosauria</taxon>
        <taxon>Saurischia</taxon>
        <taxon>Theropoda</taxon>
        <taxon>Coelurosauria</taxon>
        <taxon>Aves</taxon>
        <taxon>Neognathae</taxon>
        <taxon>Galloanserae</taxon>
        <taxon>Galliformes</taxon>
        <taxon>Phasianidae</taxon>
        <taxon>Phasianinae</taxon>
        <taxon>Gallus</taxon>
    </lineage>
</organism>
<proteinExistence type="evidence at transcript level"/>
<sequence length="949" mass="109553">MQKIKSLMTRQGLRSPQESVHDLSPIENLRFPTKEELRESWEEPTDPQAQQEIINSIEEVYFSNDAFDIVKYELERLPPVLSLQELEEYRDKLKQQQAAELERVTSLQNGLQLAAVICADGRRHLNIAKEGFTQTSLGLLANQRKRQLLIGLLKSLRTIKTLQRTDVRLSEMLEEEDYPGAIQLCLECQKAASTFKHYSCISELNSKLQDTLEQIEEQLDVALSKICKNFDINHYTKVQQAYRLLGKTQTAMDQLHMHFTQAIHNTVFQVVLGYVELCAGNTDTKFQKLQYKDLCTHITSDSYIPCLADLCKALWEVMLSYYRTMQWHENHDQDEAATVSSVSDGSSVVGTEENSFDRSYVKKKLEHGLSRIWQDVQLKVKTYLLGTDLSNFKYDDFIFVLDVISRLMQVGEEFCGSKSEVLQESIRKQSVNYFKTYHRTRLEELRMFLENETWELCPVKSSFDILQLHEFKFMVQSRSPSVSPSKQPASAISTTVTLFEQYCNGGNPFEIQADSKDDETEDVLASNGYESDEQEKSAYQEYDSDSDVPEELKRDYVDEQTGDAPMKSVSRETLRSRKKSDYSLNKGNAPILTNTTLNVVRLVGKYMQMMNILKPIAFDVIHFMSQLFDYYLYAVYTFFGRNDTFESTGLGLSSSRLRTTLNRIQESLIDLEVSADPTGTLTAAEERKEKVPSPHLSHLVVLTSGSSLYGLAERVVATESLVFLAEQFEFLQPHLDAVMPAAKKPFLQQFYSQTVSTANELRKPVYWIVAAKAIDYEQMLLLMANVKWDVKEIMSQHNVYVDSLLKEFEEFNRRLNEVSKRVRIPLIVSNILWEHCMRLANRTLVEGYANVKKCSNEGRALMQLDFQQFLMKLEKLTDIRPIPDKEFVETYIKAYYLTENDMERWIKEHREYSTKHLTNLVNVCLGSHINKKARQKLLAAIDDIDRPKR</sequence>
<protein>
    <recommendedName>
        <fullName evidence="2">Syndetin</fullName>
    </recommendedName>
    <alternativeName>
        <fullName evidence="6">Coiled-coil domain-containing protein 132</fullName>
    </alternativeName>
    <alternativeName>
        <fullName evidence="2">EARP/GARPII complex subunit VPS50</fullName>
    </alternativeName>
</protein>
<evidence type="ECO:0000250" key="1">
    <source>
        <dbReference type="UniProtKB" id="F1LSG8"/>
    </source>
</evidence>
<evidence type="ECO:0000250" key="2">
    <source>
        <dbReference type="UniProtKB" id="Q96JG6"/>
    </source>
</evidence>
<evidence type="ECO:0000255" key="3"/>
<evidence type="ECO:0000256" key="4">
    <source>
        <dbReference type="SAM" id="MobiDB-lite"/>
    </source>
</evidence>
<evidence type="ECO:0000303" key="5">
    <source>
    </source>
</evidence>
<evidence type="ECO:0000305" key="6"/>
<feature type="chain" id="PRO_0000307267" description="Syndetin">
    <location>
        <begin position="1"/>
        <end position="949"/>
    </location>
</feature>
<feature type="region of interest" description="Disordered" evidence="4">
    <location>
        <begin position="1"/>
        <end position="28"/>
    </location>
</feature>
<feature type="region of interest" description="Disordered" evidence="4">
    <location>
        <begin position="509"/>
        <end position="581"/>
    </location>
</feature>
<feature type="coiled-coil region" evidence="3">
    <location>
        <begin position="82"/>
        <end position="104"/>
    </location>
</feature>
<feature type="coiled-coil region" evidence="3">
    <location>
        <begin position="198"/>
        <end position="226"/>
    </location>
</feature>
<feature type="compositionally biased region" description="Polar residues" evidence="4">
    <location>
        <begin position="8"/>
        <end position="18"/>
    </location>
</feature>
<feature type="compositionally biased region" description="Basic and acidic residues" evidence="4">
    <location>
        <begin position="569"/>
        <end position="581"/>
    </location>
</feature>
<name>VPS50_CHICK</name>
<keyword id="KW-0175">Coiled coil</keyword>
<keyword id="KW-0967">Endosome</keyword>
<keyword id="KW-0472">Membrane</keyword>
<keyword id="KW-0653">Protein transport</keyword>
<keyword id="KW-1185">Reference proteome</keyword>
<keyword id="KW-0813">Transport</keyword>
<gene>
    <name evidence="2" type="primary">VPS50</name>
    <name type="synonym">CCDC132</name>
    <name evidence="5" type="ORF">RCJMB04_8p23</name>
</gene>
<comment type="function">
    <text evidence="2">Acts as a component of the EARP complex that is involved in endocytic recycling. The EARP complex associates with Rab4-positive endosomes and promotes recycling of internalized transferrin receptor (TFRC) to the plasma membrane.</text>
</comment>
<comment type="subunit">
    <text evidence="2">Component of the endosome-associated retrograde protein (EARP) complex.</text>
</comment>
<comment type="subcellular location">
    <subcellularLocation>
        <location evidence="2">Recycling endosome</location>
    </subcellularLocation>
    <subcellularLocation>
        <location evidence="1">Membrane</location>
    </subcellularLocation>
    <text evidence="1">Associates with membranes in an EIPR1-dependent manner.</text>
</comment>
<comment type="similarity">
    <text evidence="6">Belongs to the syndetin family.</text>
</comment>
<accession>Q5ZKV9</accession>